<evidence type="ECO:0000250" key="1"/>
<keyword id="KW-0028">Amino-acid biosynthesis</keyword>
<keyword id="KW-0963">Cytoplasm</keyword>
<keyword id="KW-0315">Glutamine amidotransferase</keyword>
<keyword id="KW-0368">Histidine biosynthesis</keyword>
<keyword id="KW-0378">Hydrolase</keyword>
<keyword id="KW-0456">Lyase</keyword>
<gene>
    <name type="primary">hisH</name>
    <name type="ordered locus">XF_2216</name>
</gene>
<organism>
    <name type="scientific">Xylella fastidiosa (strain 9a5c)</name>
    <dbReference type="NCBI Taxonomy" id="160492"/>
    <lineage>
        <taxon>Bacteria</taxon>
        <taxon>Pseudomonadati</taxon>
        <taxon>Pseudomonadota</taxon>
        <taxon>Gammaproteobacteria</taxon>
        <taxon>Lysobacterales</taxon>
        <taxon>Lysobacteraceae</taxon>
        <taxon>Xylella</taxon>
    </lineage>
</organism>
<feature type="chain" id="PRO_0000152450" description="Imidazole glycerol phosphate synthase subunit HisH">
    <location>
        <begin position="1"/>
        <end position="200"/>
    </location>
</feature>
<feature type="domain" description="Glutamine amidotransferase type-1">
    <location>
        <begin position="3"/>
        <end position="200"/>
    </location>
</feature>
<feature type="active site" description="Nucleophile" evidence="1">
    <location>
        <position position="78"/>
    </location>
</feature>
<feature type="active site" evidence="1">
    <location>
        <position position="179"/>
    </location>
</feature>
<feature type="active site" evidence="1">
    <location>
        <position position="181"/>
    </location>
</feature>
<proteinExistence type="inferred from homology"/>
<protein>
    <recommendedName>
        <fullName>Imidazole glycerol phosphate synthase subunit HisH</fullName>
        <ecNumber>4.3.2.10</ecNumber>
    </recommendedName>
    <alternativeName>
        <fullName>IGP synthase glutaminase subunit</fullName>
        <ecNumber>3.5.1.2</ecNumber>
    </alternativeName>
    <alternativeName>
        <fullName>IGP synthase subunit HisH</fullName>
    </alternativeName>
    <alternativeName>
        <fullName>ImGP synthase subunit HisH</fullName>
        <shortName>IGPS subunit HisH</shortName>
    </alternativeName>
</protein>
<name>HIS5_XYLFA</name>
<accession>Q9PBC8</accession>
<comment type="function">
    <text evidence="1">IGPS catalyzes the conversion of PRFAR and glutamine to IGP, AICAR and glutamate. The HisH subunit catalyzes the hydrolysis of glutamine to glutamate and ammonia as part of the synthesis of IGP and AICAR. The resulting ammonia molecule is channeled to the active site of HisF (By similarity).</text>
</comment>
<comment type="catalytic activity">
    <reaction>
        <text>5-[(5-phospho-1-deoxy-D-ribulos-1-ylimino)methylamino]-1-(5-phospho-beta-D-ribosyl)imidazole-4-carboxamide + L-glutamine = D-erythro-1-(imidazol-4-yl)glycerol 3-phosphate + 5-amino-1-(5-phospho-beta-D-ribosyl)imidazole-4-carboxamide + L-glutamate + H(+)</text>
        <dbReference type="Rhea" id="RHEA:24793"/>
        <dbReference type="ChEBI" id="CHEBI:15378"/>
        <dbReference type="ChEBI" id="CHEBI:29985"/>
        <dbReference type="ChEBI" id="CHEBI:58278"/>
        <dbReference type="ChEBI" id="CHEBI:58359"/>
        <dbReference type="ChEBI" id="CHEBI:58475"/>
        <dbReference type="ChEBI" id="CHEBI:58525"/>
        <dbReference type="EC" id="4.3.2.10"/>
    </reaction>
</comment>
<comment type="catalytic activity">
    <reaction>
        <text>L-glutamine + H2O = L-glutamate + NH4(+)</text>
        <dbReference type="Rhea" id="RHEA:15889"/>
        <dbReference type="ChEBI" id="CHEBI:15377"/>
        <dbReference type="ChEBI" id="CHEBI:28938"/>
        <dbReference type="ChEBI" id="CHEBI:29985"/>
        <dbReference type="ChEBI" id="CHEBI:58359"/>
        <dbReference type="EC" id="3.5.1.2"/>
    </reaction>
</comment>
<comment type="pathway">
    <text>Amino-acid biosynthesis; L-histidine biosynthesis; L-histidine from 5-phospho-alpha-D-ribose 1-diphosphate: step 5/9.</text>
</comment>
<comment type="subunit">
    <text evidence="1">Heterodimer of HisH and HisF.</text>
</comment>
<comment type="subcellular location">
    <subcellularLocation>
        <location evidence="1">Cytoplasm</location>
    </subcellularLocation>
</comment>
<sequence>MTEVALIDAGGANLGSVRYALQRLGVEPRLVCDARGLEGAARVILPGVGSAPEAMARLNNQGLIEPLLRLQVPLIGICLGMQLLFEHSEEGDVPCLALLPGRVRRLTPAPSIRVPHMGWNRLLPLRASPLLAEVPEGASAYFVHSYAVPLTTAAVAACDHGGMFTAIVQQGVRCGAQFHPERSAETGARILRNFLEMDAA</sequence>
<dbReference type="EC" id="4.3.2.10"/>
<dbReference type="EC" id="3.5.1.2"/>
<dbReference type="EMBL" id="AE003849">
    <property type="protein sequence ID" value="AAF85015.1"/>
    <property type="molecule type" value="Genomic_DNA"/>
</dbReference>
<dbReference type="PIR" id="C82585">
    <property type="entry name" value="C82585"/>
</dbReference>
<dbReference type="RefSeq" id="WP_010894664.1">
    <property type="nucleotide sequence ID" value="NC_002488.3"/>
</dbReference>
<dbReference type="SMR" id="Q9PBC8"/>
<dbReference type="STRING" id="160492.XF_2216"/>
<dbReference type="MEROPS" id="C26.965"/>
<dbReference type="KEGG" id="xfa:XF_2216"/>
<dbReference type="PATRIC" id="fig|160492.11.peg.2358"/>
<dbReference type="eggNOG" id="COG0118">
    <property type="taxonomic scope" value="Bacteria"/>
</dbReference>
<dbReference type="HOGENOM" id="CLU_071837_0_0_6"/>
<dbReference type="UniPathway" id="UPA00031">
    <property type="reaction ID" value="UER00010"/>
</dbReference>
<dbReference type="Proteomes" id="UP000000812">
    <property type="component" value="Chromosome"/>
</dbReference>
<dbReference type="GO" id="GO:0005737">
    <property type="term" value="C:cytoplasm"/>
    <property type="evidence" value="ECO:0007669"/>
    <property type="project" value="UniProtKB-SubCell"/>
</dbReference>
<dbReference type="GO" id="GO:0004359">
    <property type="term" value="F:glutaminase activity"/>
    <property type="evidence" value="ECO:0007669"/>
    <property type="project" value="UniProtKB-EC"/>
</dbReference>
<dbReference type="GO" id="GO:0000107">
    <property type="term" value="F:imidazoleglycerol-phosphate synthase activity"/>
    <property type="evidence" value="ECO:0007669"/>
    <property type="project" value="UniProtKB-UniRule"/>
</dbReference>
<dbReference type="GO" id="GO:0016829">
    <property type="term" value="F:lyase activity"/>
    <property type="evidence" value="ECO:0007669"/>
    <property type="project" value="UniProtKB-KW"/>
</dbReference>
<dbReference type="GO" id="GO:0000105">
    <property type="term" value="P:L-histidine biosynthetic process"/>
    <property type="evidence" value="ECO:0007669"/>
    <property type="project" value="UniProtKB-UniRule"/>
</dbReference>
<dbReference type="CDD" id="cd01748">
    <property type="entry name" value="GATase1_IGP_Synthase"/>
    <property type="match status" value="1"/>
</dbReference>
<dbReference type="FunFam" id="3.40.50.880:FF:000009">
    <property type="entry name" value="Imidazole glycerol phosphate synthase subunit HisH"/>
    <property type="match status" value="1"/>
</dbReference>
<dbReference type="Gene3D" id="3.40.50.880">
    <property type="match status" value="1"/>
</dbReference>
<dbReference type="HAMAP" id="MF_00278">
    <property type="entry name" value="HisH"/>
    <property type="match status" value="1"/>
</dbReference>
<dbReference type="InterPro" id="IPR029062">
    <property type="entry name" value="Class_I_gatase-like"/>
</dbReference>
<dbReference type="InterPro" id="IPR017926">
    <property type="entry name" value="GATASE"/>
</dbReference>
<dbReference type="InterPro" id="IPR010139">
    <property type="entry name" value="Imidazole-glycPsynth_HisH"/>
</dbReference>
<dbReference type="NCBIfam" id="TIGR01855">
    <property type="entry name" value="IMP_synth_hisH"/>
    <property type="match status" value="1"/>
</dbReference>
<dbReference type="PANTHER" id="PTHR42701">
    <property type="entry name" value="IMIDAZOLE GLYCEROL PHOSPHATE SYNTHASE SUBUNIT HISH"/>
    <property type="match status" value="1"/>
</dbReference>
<dbReference type="PANTHER" id="PTHR42701:SF1">
    <property type="entry name" value="IMIDAZOLE GLYCEROL PHOSPHATE SYNTHASE SUBUNIT HISH"/>
    <property type="match status" value="1"/>
</dbReference>
<dbReference type="Pfam" id="PF00117">
    <property type="entry name" value="GATase"/>
    <property type="match status" value="1"/>
</dbReference>
<dbReference type="PIRSF" id="PIRSF000495">
    <property type="entry name" value="Amidotransf_hisH"/>
    <property type="match status" value="1"/>
</dbReference>
<dbReference type="PRINTS" id="PR00097">
    <property type="entry name" value="ANTSNTHASEII"/>
</dbReference>
<dbReference type="SUPFAM" id="SSF52317">
    <property type="entry name" value="Class I glutamine amidotransferase-like"/>
    <property type="match status" value="1"/>
</dbReference>
<dbReference type="PROSITE" id="PS51273">
    <property type="entry name" value="GATASE_TYPE_1"/>
    <property type="match status" value="1"/>
</dbReference>
<reference key="1">
    <citation type="journal article" date="2000" name="Nature">
        <title>The genome sequence of the plant pathogen Xylella fastidiosa.</title>
        <authorList>
            <person name="Simpson A.J.G."/>
            <person name="Reinach F.C."/>
            <person name="Arruda P."/>
            <person name="Abreu F.A."/>
            <person name="Acencio M."/>
            <person name="Alvarenga R."/>
            <person name="Alves L.M.C."/>
            <person name="Araya J.E."/>
            <person name="Baia G.S."/>
            <person name="Baptista C.S."/>
            <person name="Barros M.H."/>
            <person name="Bonaccorsi E.D."/>
            <person name="Bordin S."/>
            <person name="Bove J.M."/>
            <person name="Briones M.R.S."/>
            <person name="Bueno M.R.P."/>
            <person name="Camargo A.A."/>
            <person name="Camargo L.E.A."/>
            <person name="Carraro D.M."/>
            <person name="Carrer H."/>
            <person name="Colauto N.B."/>
            <person name="Colombo C."/>
            <person name="Costa F.F."/>
            <person name="Costa M.C.R."/>
            <person name="Costa-Neto C.M."/>
            <person name="Coutinho L.L."/>
            <person name="Cristofani M."/>
            <person name="Dias-Neto E."/>
            <person name="Docena C."/>
            <person name="El-Dorry H."/>
            <person name="Facincani A.P."/>
            <person name="Ferreira A.J.S."/>
            <person name="Ferreira V.C.A."/>
            <person name="Ferro J.A."/>
            <person name="Fraga J.S."/>
            <person name="Franca S.C."/>
            <person name="Franco M.C."/>
            <person name="Frohme M."/>
            <person name="Furlan L.R."/>
            <person name="Garnier M."/>
            <person name="Goldman G.H."/>
            <person name="Goldman M.H.S."/>
            <person name="Gomes S.L."/>
            <person name="Gruber A."/>
            <person name="Ho P.L."/>
            <person name="Hoheisel J.D."/>
            <person name="Junqueira M.L."/>
            <person name="Kemper E.L."/>
            <person name="Kitajima J.P."/>
            <person name="Krieger J.E."/>
            <person name="Kuramae E.E."/>
            <person name="Laigret F."/>
            <person name="Lambais M.R."/>
            <person name="Leite L.C.C."/>
            <person name="Lemos E.G.M."/>
            <person name="Lemos M.V.F."/>
            <person name="Lopes S.A."/>
            <person name="Lopes C.R."/>
            <person name="Machado J.A."/>
            <person name="Machado M.A."/>
            <person name="Madeira A.M.B.N."/>
            <person name="Madeira H.M.F."/>
            <person name="Marino C.L."/>
            <person name="Marques M.V."/>
            <person name="Martins E.A.L."/>
            <person name="Martins E.M.F."/>
            <person name="Matsukuma A.Y."/>
            <person name="Menck C.F.M."/>
            <person name="Miracca E.C."/>
            <person name="Miyaki C.Y."/>
            <person name="Monteiro-Vitorello C.B."/>
            <person name="Moon D.H."/>
            <person name="Nagai M.A."/>
            <person name="Nascimento A.L.T.O."/>
            <person name="Netto L.E.S."/>
            <person name="Nhani A. Jr."/>
            <person name="Nobrega F.G."/>
            <person name="Nunes L.R."/>
            <person name="Oliveira M.A."/>
            <person name="de Oliveira M.C."/>
            <person name="de Oliveira R.C."/>
            <person name="Palmieri D.A."/>
            <person name="Paris A."/>
            <person name="Peixoto B.R."/>
            <person name="Pereira G.A.G."/>
            <person name="Pereira H.A. Jr."/>
            <person name="Pesquero J.B."/>
            <person name="Quaggio R.B."/>
            <person name="Roberto P.G."/>
            <person name="Rodrigues V."/>
            <person name="de Rosa A.J.M."/>
            <person name="de Rosa V.E. Jr."/>
            <person name="de Sa R.G."/>
            <person name="Santelli R.V."/>
            <person name="Sawasaki H.E."/>
            <person name="da Silva A.C.R."/>
            <person name="da Silva A.M."/>
            <person name="da Silva F.R."/>
            <person name="Silva W.A. Jr."/>
            <person name="da Silveira J.F."/>
            <person name="Silvestri M.L.Z."/>
            <person name="Siqueira W.J."/>
            <person name="de Souza A.A."/>
            <person name="de Souza A.P."/>
            <person name="Terenzi M.F."/>
            <person name="Truffi D."/>
            <person name="Tsai S.M."/>
            <person name="Tsuhako M.H."/>
            <person name="Vallada H."/>
            <person name="Van Sluys M.A."/>
            <person name="Verjovski-Almeida S."/>
            <person name="Vettore A.L."/>
            <person name="Zago M.A."/>
            <person name="Zatz M."/>
            <person name="Meidanis J."/>
            <person name="Setubal J.C."/>
        </authorList>
    </citation>
    <scope>NUCLEOTIDE SEQUENCE [LARGE SCALE GENOMIC DNA]</scope>
    <source>
        <strain>9a5c</strain>
    </source>
</reference>